<keyword id="KW-0167">Capsid protein</keyword>
<keyword id="KW-1142">T=3 icosahedral capsid protein</keyword>
<keyword id="KW-0946">Virion</keyword>
<sequence length="196" mass="22001">MVARGKRVVVRQLQTRARRRLPVVLATAPVRPQRKRRQRGRNNKPRGGNGFARRSSQVHEFVFSKDNLNGNSKGSITFGPSLSECKPLADGILKAYHEYNITNVELAYITEASSTSSGSIAYELDPHLKNTTIQSKINKFSITKSEKKKFSRKAINGQAWHDTSEDQFRILYEGNGDAKIAGSFRVTIKVLTQNPK</sequence>
<proteinExistence type="inferred from homology"/>
<reference key="1">
    <citation type="journal article" date="1990" name="Nucleic Acids Res.">
        <title>Nucleotide sequence of the bean leafroll luteovirus coat protein gene.</title>
        <authorList>
            <person name="Prill B."/>
            <person name="Maiss E."/>
            <person name="Katul L."/>
            <person name="Casper R."/>
        </authorList>
    </citation>
    <scope>NUCLEOTIDE SEQUENCE [GENOMIC RNA]</scope>
</reference>
<accession>P19126</accession>
<protein>
    <recommendedName>
        <fullName>Major capsid protein</fullName>
    </recommendedName>
    <alternativeName>
        <fullName>Coat protein</fullName>
        <shortName>CP</shortName>
    </alternativeName>
</protein>
<organism>
    <name type="scientific">Bean leafroll virus</name>
    <name type="common">BLRV</name>
    <dbReference type="NCBI Taxonomy" id="12041"/>
    <lineage>
        <taxon>Viruses</taxon>
        <taxon>Riboviria</taxon>
        <taxon>Orthornavirae</taxon>
        <taxon>Kitrinoviricota</taxon>
        <taxon>Tolucaviricetes</taxon>
        <taxon>Tolivirales</taxon>
        <taxon>Tombusviridae</taxon>
        <taxon>Regressovirinae</taxon>
        <taxon>Luteovirus</taxon>
        <taxon>Luteovirus phaseoli</taxon>
    </lineage>
</organism>
<organismHost>
    <name type="scientific">Cicer arietinum</name>
    <name type="common">Chickpea</name>
    <name type="synonym">Garbanzo</name>
    <dbReference type="NCBI Taxonomy" id="3827"/>
</organismHost>
<organismHost>
    <name type="scientific">Lens culinaris</name>
    <name type="common">Lentil</name>
    <name type="synonym">Cicer lens</name>
    <dbReference type="NCBI Taxonomy" id="3864"/>
</organismHost>
<organismHost>
    <name type="scientific">Medicago sativa</name>
    <name type="common">Alfalfa</name>
    <dbReference type="NCBI Taxonomy" id="3879"/>
</organismHost>
<organismHost>
    <name type="scientific">Phaseolus vulgaris</name>
    <name type="common">Kidney bean</name>
    <name type="synonym">French bean</name>
    <dbReference type="NCBI Taxonomy" id="3885"/>
</organismHost>
<organismHost>
    <name type="scientific">Pisum sativum</name>
    <name type="common">Garden pea</name>
    <name type="synonym">Lathyrus oleraceus</name>
    <dbReference type="NCBI Taxonomy" id="3888"/>
</organismHost>
<organismHost>
    <name type="scientific">Trifolium repens</name>
    <name type="common">Creeping white clover</name>
    <dbReference type="NCBI Taxonomy" id="3899"/>
</organismHost>
<organismHost>
    <name type="scientific">Vicia faba</name>
    <name type="common">Broad bean</name>
    <name type="synonym">Faba vulgaris</name>
    <dbReference type="NCBI Taxonomy" id="3906"/>
</organismHost>
<organismHost>
    <name type="scientific">Vigna unguiculata</name>
    <name type="common">Cowpea</name>
    <dbReference type="NCBI Taxonomy" id="3917"/>
</organismHost>
<dbReference type="EMBL" id="X53865">
    <property type="protein sequence ID" value="CAA37858.1"/>
    <property type="molecule type" value="Genomic_RNA"/>
</dbReference>
<dbReference type="PIR" id="S11437">
    <property type="entry name" value="S11437"/>
</dbReference>
<dbReference type="SMR" id="P19126"/>
<dbReference type="GO" id="GO:0039617">
    <property type="term" value="C:T=3 icosahedral viral capsid"/>
    <property type="evidence" value="ECO:0007669"/>
    <property type="project" value="UniProtKB-KW"/>
</dbReference>
<dbReference type="GO" id="GO:0005198">
    <property type="term" value="F:structural molecule activity"/>
    <property type="evidence" value="ECO:0007669"/>
    <property type="project" value="InterPro"/>
</dbReference>
<dbReference type="Gene3D" id="2.60.120.20">
    <property type="match status" value="1"/>
</dbReference>
<dbReference type="InterPro" id="IPR001517">
    <property type="entry name" value="Luteo_coat"/>
</dbReference>
<dbReference type="InterPro" id="IPR029053">
    <property type="entry name" value="Viral_coat"/>
</dbReference>
<dbReference type="Pfam" id="PF00894">
    <property type="entry name" value="Luteo_coat"/>
    <property type="match status" value="1"/>
</dbReference>
<dbReference type="PRINTS" id="PR00915">
    <property type="entry name" value="LUTEOGP1COAT"/>
</dbReference>
<gene>
    <name type="ORF">ORF3</name>
</gene>
<evidence type="ECO:0000256" key="1">
    <source>
        <dbReference type="SAM" id="MobiDB-lite"/>
    </source>
</evidence>
<evidence type="ECO:0000305" key="2"/>
<name>CAPSD_BLRV</name>
<feature type="chain" id="PRO_0000222402" description="Major capsid protein">
    <location>
        <begin position="1"/>
        <end position="196"/>
    </location>
</feature>
<feature type="region of interest" description="Disordered" evidence="1">
    <location>
        <begin position="27"/>
        <end position="55"/>
    </location>
</feature>
<feature type="compositionally biased region" description="Basic residues" evidence="1">
    <location>
        <begin position="32"/>
        <end position="44"/>
    </location>
</feature>
<comment type="function">
    <text>Major capsid protein.</text>
</comment>
<comment type="subcellular location">
    <subcellularLocation>
        <location evidence="2">Virion</location>
    </subcellularLocation>
</comment>
<comment type="miscellaneous">
    <text>The N-terminal region like those of many plant virus capsid proteins is highly basic. It has been suggested that these regions may be involved in protein-RNA interaction.</text>
</comment>
<comment type="similarity">
    <text evidence="2">Belongs to the luteoviruses capsid protein family.</text>
</comment>